<evidence type="ECO:0000269" key="1">
    <source>
    </source>
</evidence>
<evidence type="ECO:0000305" key="2"/>
<reference key="1">
    <citation type="journal article" date="1976" name="J. Biochem.">
        <title>Amino acid sequence of an active fragment of potato proteinase inhibitor IIa.</title>
        <authorList>
            <person name="Iwasaki T."/>
            <person name="Kiyohara T."/>
            <person name="Yoshikawa M."/>
        </authorList>
    </citation>
    <scope>PROTEIN SEQUENCE</scope>
</reference>
<protein>
    <recommendedName>
        <fullName>Proteinase inhibitor IIA</fullName>
    </recommendedName>
</protein>
<proteinExistence type="evidence at protein level"/>
<organism>
    <name type="scientific">Solanum tuberosum</name>
    <name type="common">Potato</name>
    <dbReference type="NCBI Taxonomy" id="4113"/>
    <lineage>
        <taxon>Eukaryota</taxon>
        <taxon>Viridiplantae</taxon>
        <taxon>Streptophyta</taxon>
        <taxon>Embryophyta</taxon>
        <taxon>Tracheophyta</taxon>
        <taxon>Spermatophyta</taxon>
        <taxon>Magnoliopsida</taxon>
        <taxon>eudicotyledons</taxon>
        <taxon>Gunneridae</taxon>
        <taxon>Pentapetalae</taxon>
        <taxon>asterids</taxon>
        <taxon>lamiids</taxon>
        <taxon>Solanales</taxon>
        <taxon>Solanaceae</taxon>
        <taxon>Solanoideae</taxon>
        <taxon>Solaneae</taxon>
        <taxon>Solanum</taxon>
    </lineage>
</organism>
<comment type="function">
    <text>Inhibits trypsin strongly and chymotrypsin temporarily.</text>
</comment>
<comment type="subcellular location">
    <subcellularLocation>
        <location>Secreted</location>
    </subcellularLocation>
</comment>
<comment type="similarity">
    <text evidence="2">Belongs to the protease inhibitor I20 (potato type II proteinase inhibitor) family.</text>
</comment>
<dbReference type="PIR" id="A01320">
    <property type="entry name" value="XKPO2A"/>
</dbReference>
<dbReference type="SMR" id="P01081"/>
<dbReference type="InParanoid" id="P01081"/>
<dbReference type="Proteomes" id="UP000011115">
    <property type="component" value="Unassembled WGS sequence"/>
</dbReference>
<dbReference type="GO" id="GO:0005576">
    <property type="term" value="C:extracellular region"/>
    <property type="evidence" value="ECO:0007669"/>
    <property type="project" value="UniProtKB-SubCell"/>
</dbReference>
<dbReference type="GO" id="GO:0004867">
    <property type="term" value="F:serine-type endopeptidase inhibitor activity"/>
    <property type="evidence" value="ECO:0007669"/>
    <property type="project" value="UniProtKB-KW"/>
</dbReference>
<dbReference type="SUPFAM" id="SSF100897">
    <property type="entry name" value="Plant proteinase inhibitors"/>
    <property type="match status" value="1"/>
</dbReference>
<keyword id="KW-0903">Direct protein sequencing</keyword>
<keyword id="KW-1015">Disulfide bond</keyword>
<keyword id="KW-0646">Protease inhibitor</keyword>
<keyword id="KW-1185">Reference proteome</keyword>
<keyword id="KW-0964">Secreted</keyword>
<keyword id="KW-0722">Serine protease inhibitor</keyword>
<feature type="chain" id="PRO_0000217675" description="Proteinase inhibitor IIA">
    <location>
        <begin position="1" status="less than"/>
        <end position="45" status="greater than"/>
    </location>
</feature>
<feature type="site" description="Reactive bond for trypsin">
    <location>
        <begin position="32"/>
        <end position="33"/>
    </location>
</feature>
<feature type="disulfide bond" evidence="1">
    <location>
        <begin position="10"/>
        <end position="24"/>
    </location>
</feature>
<feature type="disulfide bond" evidence="1">
    <location>
        <begin position="14"/>
        <end position="35"/>
    </location>
</feature>
<feature type="disulfide bond" evidence="1">
    <location>
        <begin position="20"/>
        <end position="43"/>
    </location>
</feature>
<feature type="non-terminal residue">
    <location>
        <position position="1"/>
    </location>
</feature>
<feature type="non-terminal residue">
    <location>
        <position position="45"/>
    </location>
</feature>
<name>IP2A_SOLTU</name>
<accession>P01081</accession>
<sequence length="45" mass="4955">SEGSPENRICTNNCAGYKGCNYNCDTNIASYKSVCEGEFDPKCLR</sequence>